<proteinExistence type="evidence at protein level"/>
<dbReference type="SMR" id="P84600"/>
<dbReference type="GO" id="GO:0005576">
    <property type="term" value="C:extracellular region"/>
    <property type="evidence" value="ECO:0007669"/>
    <property type="project" value="UniProtKB-SubCell"/>
</dbReference>
<dbReference type="GO" id="GO:0042742">
    <property type="term" value="P:defense response to bacterium"/>
    <property type="evidence" value="ECO:0007669"/>
    <property type="project" value="UniProtKB-KW"/>
</dbReference>
<dbReference type="GO" id="GO:0050832">
    <property type="term" value="P:defense response to fungus"/>
    <property type="evidence" value="ECO:0007669"/>
    <property type="project" value="UniProtKB-KW"/>
</dbReference>
<dbReference type="GO" id="GO:0031640">
    <property type="term" value="P:killing of cells of another organism"/>
    <property type="evidence" value="ECO:0007669"/>
    <property type="project" value="UniProtKB-KW"/>
</dbReference>
<comment type="function">
    <text evidence="1 3">Has antibacterial activity against the Gram-negative bacterium E.coli and the Gram-positive bacterium S.aureus (PubMed:16844081). Has antiprotozoal activity against L.amazonensis (PubMed:16844081). Has antifungal activity (By similarity). Has no hemolytic activity (PubMed:16844081).</text>
</comment>
<comment type="subcellular location">
    <subcellularLocation>
        <location evidence="3">Secreted</location>
    </subcellularLocation>
</comment>
<comment type="tissue specificity">
    <text evidence="3">Expressed by the skin glands.</text>
</comment>
<comment type="mass spectrometry"/>
<comment type="miscellaneous">
    <text evidence="6">The primary structure of this peptide is identical to that of Dermaseptin 01 from Pithecopus oreades (AC P83637).</text>
</comment>
<comment type="similarity">
    <text evidence="2">Belongs to the frog skin active peptide (FSAP) family. Dermaseptin subfamily.</text>
</comment>
<comment type="online information" name="The antimicrobial peptide database">
    <link uri="https://wangapd3.com/database/query_output.php?ID=1389"/>
</comment>
<keyword id="KW-0027">Amidation</keyword>
<keyword id="KW-0878">Amphibian defense peptide</keyword>
<keyword id="KW-0044">Antibiotic</keyword>
<keyword id="KW-0929">Antimicrobial</keyword>
<keyword id="KW-0903">Direct protein sequencing</keyword>
<keyword id="KW-0295">Fungicide</keyword>
<keyword id="KW-0964">Secreted</keyword>
<evidence type="ECO:0000250" key="1">
    <source>
        <dbReference type="UniProtKB" id="P83637"/>
    </source>
</evidence>
<evidence type="ECO:0000255" key="2"/>
<evidence type="ECO:0000269" key="3">
    <source>
    </source>
</evidence>
<evidence type="ECO:0000303" key="4">
    <source>
    </source>
</evidence>
<evidence type="ECO:0000303" key="5">
    <source>
    </source>
</evidence>
<evidence type="ECO:0000305" key="6"/>
<accession>P84600</accession>
<sequence>GLWSTIKQKGKEAAIAAAKAAGQAALGAL</sequence>
<protein>
    <recommendedName>
        <fullName evidence="5">Dermaseptin-H7</fullName>
        <shortName evidence="5">DRS-H7</shortName>
    </recommendedName>
    <alternativeName>
        <fullName evidence="4">DShypo 05</fullName>
    </alternativeName>
</protein>
<organism>
    <name type="scientific">Pithecopus hypochondrialis</name>
    <name type="common">Orange-legged leaf frog</name>
    <name type="synonym">Phyllomedusa hypochondrialis</name>
    <dbReference type="NCBI Taxonomy" id="317381"/>
    <lineage>
        <taxon>Eukaryota</taxon>
        <taxon>Metazoa</taxon>
        <taxon>Chordata</taxon>
        <taxon>Craniata</taxon>
        <taxon>Vertebrata</taxon>
        <taxon>Euteleostomi</taxon>
        <taxon>Amphibia</taxon>
        <taxon>Batrachia</taxon>
        <taxon>Anura</taxon>
        <taxon>Neobatrachia</taxon>
        <taxon>Hyloidea</taxon>
        <taxon>Hylidae</taxon>
        <taxon>Phyllomedusinae</taxon>
        <taxon>Pithecopus</taxon>
    </lineage>
</organism>
<name>DRS7_PITHY</name>
<feature type="peptide" id="PRO_0000248497" description="Dermaseptin-H7">
    <location>
        <begin position="1"/>
        <end position="29"/>
    </location>
</feature>
<feature type="modified residue" description="Leucine amide" evidence="3">
    <location>
        <position position="29"/>
    </location>
</feature>
<reference key="1">
    <citation type="journal article" date="2006" name="Biochem. Biophys. Res. Commun.">
        <title>Novel dermaseptins from Phyllomedusa hypochondrialis (Amphibia).</title>
        <authorList>
            <person name="Brand G.D."/>
            <person name="Leite J.R.S.A."/>
            <person name="de Sa Mandel S.M."/>
            <person name="Mesquita D.A."/>
            <person name="Silva L.P."/>
            <person name="Prates M.V."/>
            <person name="Barbosa E.A."/>
            <person name="Vinecky F."/>
            <person name="Martins G.R."/>
            <person name="Galasso J.H."/>
            <person name="Kuckelhaus S.A.S."/>
            <person name="Sampaio R.N.R."/>
            <person name="Furtado J.R. Jr."/>
            <person name="Andrade A.C."/>
            <person name="Bloch C. Jr."/>
        </authorList>
    </citation>
    <scope>PROTEIN SEQUENCE</scope>
    <scope>FUNCTION</scope>
    <scope>SUBCELLULAR LOCATION</scope>
    <scope>TISSUE SPECIFICITY</scope>
    <scope>MASS SPECTROMETRY</scope>
    <scope>AMIDATION AT LEU-29</scope>
    <source>
        <tissue>Skin secretion</tissue>
    </source>
</reference>
<reference key="2">
    <citation type="journal article" date="2008" name="Peptides">
        <title>A consistent nomenclature of antimicrobial peptides isolated from frogs of the subfamily Phyllomedusinae.</title>
        <authorList>
            <person name="Amiche M."/>
            <person name="Ladram A."/>
            <person name="Nicolas P."/>
        </authorList>
    </citation>
    <scope>NOMENCLATURE</scope>
</reference>